<protein>
    <recommendedName>
        <fullName evidence="1">Large ribosomal subunit protein eL37</fullName>
    </recommendedName>
    <alternativeName>
        <fullName evidence="2">50S ribosomal protein L37e</fullName>
    </alternativeName>
</protein>
<sequence>MTKGTPSQGRHNKGSNHIVCRRCGRRAYHVRKKACAACGFGKSTKIKRFAWKWKKVTGKGNRLK</sequence>
<gene>
    <name evidence="1" type="primary">rpl37e</name>
    <name type="ordered locus">Mevan_0469</name>
</gene>
<evidence type="ECO:0000255" key="1">
    <source>
        <dbReference type="HAMAP-Rule" id="MF_00547"/>
    </source>
</evidence>
<evidence type="ECO:0000305" key="2"/>
<reference key="1">
    <citation type="submission" date="2007-06" db="EMBL/GenBank/DDBJ databases">
        <title>Complete sequence of Methanococcus vannielii SB.</title>
        <authorList>
            <consortium name="US DOE Joint Genome Institute"/>
            <person name="Copeland A."/>
            <person name="Lucas S."/>
            <person name="Lapidus A."/>
            <person name="Barry K."/>
            <person name="Glavina del Rio T."/>
            <person name="Dalin E."/>
            <person name="Tice H."/>
            <person name="Pitluck S."/>
            <person name="Chain P."/>
            <person name="Malfatti S."/>
            <person name="Shin M."/>
            <person name="Vergez L."/>
            <person name="Schmutz J."/>
            <person name="Larimer F."/>
            <person name="Land M."/>
            <person name="Hauser L."/>
            <person name="Kyrpides N."/>
            <person name="Anderson I."/>
            <person name="Sieprawska-Lupa M."/>
            <person name="Whitman W.B."/>
            <person name="Richardson P."/>
        </authorList>
    </citation>
    <scope>NUCLEOTIDE SEQUENCE [LARGE SCALE GENOMIC DNA]</scope>
    <source>
        <strain>ATCC 35089 / DSM 1224 / JCM 13029 / OCM 148 / SB</strain>
    </source>
</reference>
<organism>
    <name type="scientific">Methanococcus vannielii (strain ATCC 35089 / DSM 1224 / JCM 13029 / OCM 148 / SB)</name>
    <dbReference type="NCBI Taxonomy" id="406327"/>
    <lineage>
        <taxon>Archaea</taxon>
        <taxon>Methanobacteriati</taxon>
        <taxon>Methanobacteriota</taxon>
        <taxon>Methanomada group</taxon>
        <taxon>Methanococci</taxon>
        <taxon>Methanococcales</taxon>
        <taxon>Methanococcaceae</taxon>
        <taxon>Methanococcus</taxon>
    </lineage>
</organism>
<feature type="chain" id="PRO_1000017769" description="Large ribosomal subunit protein eL37">
    <location>
        <begin position="1"/>
        <end position="64"/>
    </location>
</feature>
<feature type="zinc finger region" description="C4-type" evidence="1">
    <location>
        <begin position="20"/>
        <end position="38"/>
    </location>
</feature>
<feature type="binding site" evidence="1">
    <location>
        <position position="20"/>
    </location>
    <ligand>
        <name>Zn(2+)</name>
        <dbReference type="ChEBI" id="CHEBI:29105"/>
    </ligand>
</feature>
<feature type="binding site" evidence="1">
    <location>
        <position position="23"/>
    </location>
    <ligand>
        <name>Zn(2+)</name>
        <dbReference type="ChEBI" id="CHEBI:29105"/>
    </ligand>
</feature>
<feature type="binding site" evidence="1">
    <location>
        <position position="35"/>
    </location>
    <ligand>
        <name>Zn(2+)</name>
        <dbReference type="ChEBI" id="CHEBI:29105"/>
    </ligand>
</feature>
<feature type="binding site" evidence="1">
    <location>
        <position position="38"/>
    </location>
    <ligand>
        <name>Zn(2+)</name>
        <dbReference type="ChEBI" id="CHEBI:29105"/>
    </ligand>
</feature>
<name>RL37_METVS</name>
<accession>A6UPF4</accession>
<keyword id="KW-0479">Metal-binding</keyword>
<keyword id="KW-0687">Ribonucleoprotein</keyword>
<keyword id="KW-0689">Ribosomal protein</keyword>
<keyword id="KW-0694">RNA-binding</keyword>
<keyword id="KW-0699">rRNA-binding</keyword>
<keyword id="KW-0862">Zinc</keyword>
<keyword id="KW-0863">Zinc-finger</keyword>
<comment type="function">
    <text evidence="1">Binds to the 23S rRNA.</text>
</comment>
<comment type="cofactor">
    <cofactor evidence="1">
        <name>Zn(2+)</name>
        <dbReference type="ChEBI" id="CHEBI:29105"/>
    </cofactor>
    <text evidence="1">Binds 1 zinc ion per subunit.</text>
</comment>
<comment type="similarity">
    <text evidence="1">Belongs to the eukaryotic ribosomal protein eL37 family.</text>
</comment>
<dbReference type="EMBL" id="CP000742">
    <property type="protein sequence ID" value="ABR54376.1"/>
    <property type="molecule type" value="Genomic_DNA"/>
</dbReference>
<dbReference type="RefSeq" id="WP_011972279.1">
    <property type="nucleotide sequence ID" value="NC_009634.1"/>
</dbReference>
<dbReference type="SMR" id="A6UPF4"/>
<dbReference type="STRING" id="406327.Mevan_0469"/>
<dbReference type="GeneID" id="5325425"/>
<dbReference type="KEGG" id="mvn:Mevan_0469"/>
<dbReference type="eggNOG" id="arCOG04126">
    <property type="taxonomic scope" value="Archaea"/>
</dbReference>
<dbReference type="HOGENOM" id="CLU_208825_0_0_2"/>
<dbReference type="OrthoDB" id="5619at2157"/>
<dbReference type="Proteomes" id="UP000001107">
    <property type="component" value="Chromosome"/>
</dbReference>
<dbReference type="GO" id="GO:1990904">
    <property type="term" value="C:ribonucleoprotein complex"/>
    <property type="evidence" value="ECO:0007669"/>
    <property type="project" value="UniProtKB-KW"/>
</dbReference>
<dbReference type="GO" id="GO:0005840">
    <property type="term" value="C:ribosome"/>
    <property type="evidence" value="ECO:0007669"/>
    <property type="project" value="UniProtKB-KW"/>
</dbReference>
<dbReference type="GO" id="GO:0019843">
    <property type="term" value="F:rRNA binding"/>
    <property type="evidence" value="ECO:0007669"/>
    <property type="project" value="UniProtKB-KW"/>
</dbReference>
<dbReference type="GO" id="GO:0003735">
    <property type="term" value="F:structural constituent of ribosome"/>
    <property type="evidence" value="ECO:0007669"/>
    <property type="project" value="InterPro"/>
</dbReference>
<dbReference type="GO" id="GO:0008270">
    <property type="term" value="F:zinc ion binding"/>
    <property type="evidence" value="ECO:0007669"/>
    <property type="project" value="UniProtKB-UniRule"/>
</dbReference>
<dbReference type="GO" id="GO:0006412">
    <property type="term" value="P:translation"/>
    <property type="evidence" value="ECO:0007669"/>
    <property type="project" value="UniProtKB-UniRule"/>
</dbReference>
<dbReference type="FunFam" id="2.20.25.30:FF:000003">
    <property type="entry name" value="50S ribosomal protein L37e"/>
    <property type="match status" value="1"/>
</dbReference>
<dbReference type="Gene3D" id="2.20.25.30">
    <property type="match status" value="1"/>
</dbReference>
<dbReference type="HAMAP" id="MF_00547">
    <property type="entry name" value="Ribosomal_eL37"/>
    <property type="match status" value="1"/>
</dbReference>
<dbReference type="InterPro" id="IPR001569">
    <property type="entry name" value="Ribosomal_eL37"/>
</dbReference>
<dbReference type="InterPro" id="IPR011331">
    <property type="entry name" value="Ribosomal_eL37/eL43"/>
</dbReference>
<dbReference type="InterPro" id="IPR018267">
    <property type="entry name" value="Ribosomal_eL37_CS"/>
</dbReference>
<dbReference type="InterPro" id="IPR011332">
    <property type="entry name" value="Ribosomal_zn-bd"/>
</dbReference>
<dbReference type="NCBIfam" id="NF003214">
    <property type="entry name" value="PRK04179.1"/>
    <property type="match status" value="1"/>
</dbReference>
<dbReference type="Pfam" id="PF01907">
    <property type="entry name" value="Ribosomal_L37e"/>
    <property type="match status" value="1"/>
</dbReference>
<dbReference type="SUPFAM" id="SSF57829">
    <property type="entry name" value="Zn-binding ribosomal proteins"/>
    <property type="match status" value="1"/>
</dbReference>
<dbReference type="PROSITE" id="PS01077">
    <property type="entry name" value="RIBOSOMAL_L37E"/>
    <property type="match status" value="1"/>
</dbReference>
<proteinExistence type="inferred from homology"/>